<keyword id="KW-0120">Carbon dioxide fixation</keyword>
<keyword id="KW-0456">Lyase</keyword>
<keyword id="KW-0460">Magnesium</keyword>
<keyword id="KW-1185">Reference proteome</keyword>
<protein>
    <recommendedName>
        <fullName evidence="1">Phosphoenolpyruvate carboxylase</fullName>
        <shortName evidence="1">PEPC</shortName>
        <shortName evidence="1">PEPCase</shortName>
        <ecNumber evidence="1">4.1.1.31</ecNumber>
    </recommendedName>
</protein>
<gene>
    <name evidence="1" type="primary">ppcA</name>
    <name type="ordered locus">OEOE_1798</name>
</gene>
<feature type="chain" id="PRO_0000309597" description="Phosphoenolpyruvate carboxylase">
    <location>
        <begin position="1"/>
        <end position="507"/>
    </location>
</feature>
<feature type="region of interest" description="Disordered" evidence="2">
    <location>
        <begin position="1"/>
        <end position="25"/>
    </location>
</feature>
<evidence type="ECO:0000255" key="1">
    <source>
        <dbReference type="HAMAP-Rule" id="MF_01904"/>
    </source>
</evidence>
<evidence type="ECO:0000256" key="2">
    <source>
        <dbReference type="SAM" id="MobiDB-lite"/>
    </source>
</evidence>
<dbReference type="EC" id="4.1.1.31" evidence="1"/>
<dbReference type="EMBL" id="CP000411">
    <property type="protein sequence ID" value="ABJ57637.1"/>
    <property type="molecule type" value="Genomic_DNA"/>
</dbReference>
<dbReference type="RefSeq" id="WP_002826425.1">
    <property type="nucleotide sequence ID" value="NC_008528.1"/>
</dbReference>
<dbReference type="SMR" id="Q04D35"/>
<dbReference type="STRING" id="203123.OEOE_1798"/>
<dbReference type="KEGG" id="ooe:OEOE_1798"/>
<dbReference type="PATRIC" id="fig|203123.7.peg.1838"/>
<dbReference type="eggNOG" id="COG1892">
    <property type="taxonomic scope" value="Bacteria"/>
</dbReference>
<dbReference type="HOGENOM" id="CLU_517433_0_0_9"/>
<dbReference type="Proteomes" id="UP000000774">
    <property type="component" value="Chromosome"/>
</dbReference>
<dbReference type="GO" id="GO:0000287">
    <property type="term" value="F:magnesium ion binding"/>
    <property type="evidence" value="ECO:0007669"/>
    <property type="project" value="UniProtKB-UniRule"/>
</dbReference>
<dbReference type="GO" id="GO:0008964">
    <property type="term" value="F:phosphoenolpyruvate carboxylase activity"/>
    <property type="evidence" value="ECO:0007669"/>
    <property type="project" value="UniProtKB-UniRule"/>
</dbReference>
<dbReference type="GO" id="GO:0015977">
    <property type="term" value="P:carbon fixation"/>
    <property type="evidence" value="ECO:0007669"/>
    <property type="project" value="UniProtKB-UniRule"/>
</dbReference>
<dbReference type="GO" id="GO:0006107">
    <property type="term" value="P:oxaloacetate metabolic process"/>
    <property type="evidence" value="ECO:0007669"/>
    <property type="project" value="UniProtKB-UniRule"/>
</dbReference>
<dbReference type="GO" id="GO:0006099">
    <property type="term" value="P:tricarboxylic acid cycle"/>
    <property type="evidence" value="ECO:0007669"/>
    <property type="project" value="InterPro"/>
</dbReference>
<dbReference type="HAMAP" id="MF_01904">
    <property type="entry name" value="PEPcase_type2"/>
    <property type="match status" value="1"/>
</dbReference>
<dbReference type="InterPro" id="IPR007566">
    <property type="entry name" value="PEP_COase_arc-type"/>
</dbReference>
<dbReference type="InterPro" id="IPR015813">
    <property type="entry name" value="Pyrv/PenolPyrv_kinase-like_dom"/>
</dbReference>
<dbReference type="NCBIfam" id="TIGR02751">
    <property type="entry name" value="PEPCase_arch"/>
    <property type="match status" value="1"/>
</dbReference>
<dbReference type="Pfam" id="PF14010">
    <property type="entry name" value="PEPcase_2"/>
    <property type="match status" value="1"/>
</dbReference>
<dbReference type="PIRSF" id="PIRSF006677">
    <property type="entry name" value="UCP006677"/>
    <property type="match status" value="1"/>
</dbReference>
<dbReference type="SUPFAM" id="SSF51621">
    <property type="entry name" value="Phosphoenolpyruvate/pyruvate domain"/>
    <property type="match status" value="1"/>
</dbReference>
<accession>Q04D35</accession>
<organism>
    <name type="scientific">Oenococcus oeni (strain ATCC BAA-331 / PSU-1)</name>
    <dbReference type="NCBI Taxonomy" id="203123"/>
    <lineage>
        <taxon>Bacteria</taxon>
        <taxon>Bacillati</taxon>
        <taxon>Bacillota</taxon>
        <taxon>Bacilli</taxon>
        <taxon>Lactobacillales</taxon>
        <taxon>Lactobacillaceae</taxon>
        <taxon>Oenococcus</taxon>
    </lineage>
</organism>
<proteinExistence type="inferred from homology"/>
<name>CAPPA_OENOB</name>
<sequence>MHKIDRKIPNIMGTQHPDNAGVPFFKGDQSKNPFITAYKEVDEAFNNFAVLDTDEYMWDWEGKHADAAVIDRLYSEHYEYFKGHQLGRDKFLTFRLPNIWEEKGYSLMQAMTTMLSAEDFARDLSFEQRPLFEAILPMAQTSEQLIEIEDKFSKLAHFKSDEFTSGSNNTDHIEMIPLFEGFKTQLHSPEILKEYLQLYEQRTGQSLPYLRVFLAGSDSALSNGFMNSIIGNKLALTRLHEFSDQKDLPIFPIAGTGSTIFRGGLSPKWIKRYLQEFPGLKTATVQSAFRYDYPLKQVQSAIKELRSGLQNNQAVSMTDREQNVLINVAKKSADCYHETLDQLINDLQKIFDAFPKRRDRRQHVGILGYSRQVDGYKMPRAITFTGSLYSVGVPPEFIGFGRALMSLNAEELAIFTRHYPNLRNDFTFLAHYISVDALESLIAKNPAWLEAKKDIQDLQSILQFEIGPSNEKEEEHSRLASDLVKISDPTTRTLLIQKQAVLRNFLG</sequence>
<reference key="1">
    <citation type="journal article" date="2006" name="Proc. Natl. Acad. Sci. U.S.A.">
        <title>Comparative genomics of the lactic acid bacteria.</title>
        <authorList>
            <person name="Makarova K.S."/>
            <person name="Slesarev A."/>
            <person name="Wolf Y.I."/>
            <person name="Sorokin A."/>
            <person name="Mirkin B."/>
            <person name="Koonin E.V."/>
            <person name="Pavlov A."/>
            <person name="Pavlova N."/>
            <person name="Karamychev V."/>
            <person name="Polouchine N."/>
            <person name="Shakhova V."/>
            <person name="Grigoriev I."/>
            <person name="Lou Y."/>
            <person name="Rohksar D."/>
            <person name="Lucas S."/>
            <person name="Huang K."/>
            <person name="Goodstein D.M."/>
            <person name="Hawkins T."/>
            <person name="Plengvidhya V."/>
            <person name="Welker D."/>
            <person name="Hughes J."/>
            <person name="Goh Y."/>
            <person name="Benson A."/>
            <person name="Baldwin K."/>
            <person name="Lee J.-H."/>
            <person name="Diaz-Muniz I."/>
            <person name="Dosti B."/>
            <person name="Smeianov V."/>
            <person name="Wechter W."/>
            <person name="Barabote R."/>
            <person name="Lorca G."/>
            <person name="Altermann E."/>
            <person name="Barrangou R."/>
            <person name="Ganesan B."/>
            <person name="Xie Y."/>
            <person name="Rawsthorne H."/>
            <person name="Tamir D."/>
            <person name="Parker C."/>
            <person name="Breidt F."/>
            <person name="Broadbent J.R."/>
            <person name="Hutkins R."/>
            <person name="O'Sullivan D."/>
            <person name="Steele J."/>
            <person name="Unlu G."/>
            <person name="Saier M.H. Jr."/>
            <person name="Klaenhammer T."/>
            <person name="Richardson P."/>
            <person name="Kozyavkin S."/>
            <person name="Weimer B.C."/>
            <person name="Mills D.A."/>
        </authorList>
    </citation>
    <scope>NUCLEOTIDE SEQUENCE [LARGE SCALE GENOMIC DNA]</scope>
    <source>
        <strain>ATCC BAA-331 / PSU-1</strain>
    </source>
</reference>
<comment type="function">
    <text evidence="1">Catalyzes the irreversible beta-carboxylation of phosphoenolpyruvate (PEP) to form oxaloacetate (OAA), a four-carbon dicarboxylic acid source for the tricarboxylic acid cycle.</text>
</comment>
<comment type="catalytic activity">
    <reaction evidence="1">
        <text>oxaloacetate + phosphate = phosphoenolpyruvate + hydrogencarbonate</text>
        <dbReference type="Rhea" id="RHEA:28370"/>
        <dbReference type="ChEBI" id="CHEBI:16452"/>
        <dbReference type="ChEBI" id="CHEBI:17544"/>
        <dbReference type="ChEBI" id="CHEBI:43474"/>
        <dbReference type="ChEBI" id="CHEBI:58702"/>
        <dbReference type="EC" id="4.1.1.31"/>
    </reaction>
</comment>
<comment type="cofactor">
    <cofactor evidence="1">
        <name>Mg(2+)</name>
        <dbReference type="ChEBI" id="CHEBI:18420"/>
    </cofactor>
</comment>
<comment type="subunit">
    <text evidence="1">Homotetramer.</text>
</comment>
<comment type="similarity">
    <text evidence="1">Belongs to the PEPCase type 2 family.</text>
</comment>